<keyword id="KW-0002">3D-structure</keyword>
<keyword id="KW-0004">4Fe-4S</keyword>
<keyword id="KW-0150">Chloroplast</keyword>
<keyword id="KW-0408">Iron</keyword>
<keyword id="KW-0411">Iron-sulfur</keyword>
<keyword id="KW-0472">Membrane</keyword>
<keyword id="KW-0479">Metal-binding</keyword>
<keyword id="KW-0520">NAD</keyword>
<keyword id="KW-0521">NADP</keyword>
<keyword id="KW-0934">Plastid</keyword>
<keyword id="KW-0618">Plastoquinone</keyword>
<keyword id="KW-0874">Quinone</keyword>
<keyword id="KW-1185">Reference proteome</keyword>
<keyword id="KW-0677">Repeat</keyword>
<keyword id="KW-0793">Thylakoid</keyword>
<keyword id="KW-1278">Translocase</keyword>
<protein>
    <recommendedName>
        <fullName evidence="1">NAD(P)H-quinone oxidoreductase subunit I, chloroplastic</fullName>
        <ecNumber evidence="1">7.1.1.-</ecNumber>
    </recommendedName>
    <alternativeName>
        <fullName evidence="1">NAD(P)H dehydrogenase subunit I</fullName>
        <shortName evidence="1">NDH subunit I</shortName>
    </alternativeName>
    <alternativeName>
        <fullName evidence="1">NADH-plastoquinone oxidoreductase subunit I</fullName>
    </alternativeName>
</protein>
<reference key="1">
    <citation type="journal article" date="1999" name="DNA Res.">
        <title>Complete structure of the chloroplast genome of Arabidopsis thaliana.</title>
        <authorList>
            <person name="Sato S."/>
            <person name="Nakamura Y."/>
            <person name="Kaneko T."/>
            <person name="Asamizu E."/>
            <person name="Tabata S."/>
        </authorList>
    </citation>
    <scope>NUCLEOTIDE SEQUENCE [LARGE SCALE GENOMIC DNA]</scope>
    <source>
        <strain>cv. Columbia</strain>
    </source>
</reference>
<geneLocation type="chloroplast"/>
<evidence type="ECO:0000255" key="1">
    <source>
        <dbReference type="HAMAP-Rule" id="MF_01351"/>
    </source>
</evidence>
<accession>P56755</accession>
<gene>
    <name evidence="1" type="primary">ndhI</name>
    <name type="ordered locus">AtCg01090</name>
</gene>
<feature type="chain" id="PRO_0000118704" description="NAD(P)H-quinone oxidoreductase subunit I, chloroplastic">
    <location>
        <begin position="1"/>
        <end position="172"/>
    </location>
</feature>
<feature type="domain" description="4Fe-4S ferredoxin-type 1" evidence="1">
    <location>
        <begin position="55"/>
        <end position="84"/>
    </location>
</feature>
<feature type="domain" description="4Fe-4S ferredoxin-type 2" evidence="1">
    <location>
        <begin position="95"/>
        <end position="124"/>
    </location>
</feature>
<feature type="binding site" evidence="1">
    <location>
        <position position="64"/>
    </location>
    <ligand>
        <name>[4Fe-4S] cluster</name>
        <dbReference type="ChEBI" id="CHEBI:49883"/>
        <label>1</label>
    </ligand>
</feature>
<feature type="binding site" evidence="1">
    <location>
        <position position="67"/>
    </location>
    <ligand>
        <name>[4Fe-4S] cluster</name>
        <dbReference type="ChEBI" id="CHEBI:49883"/>
        <label>1</label>
    </ligand>
</feature>
<feature type="binding site" evidence="1">
    <location>
        <position position="70"/>
    </location>
    <ligand>
        <name>[4Fe-4S] cluster</name>
        <dbReference type="ChEBI" id="CHEBI:49883"/>
        <label>1</label>
    </ligand>
</feature>
<feature type="binding site" evidence="1">
    <location>
        <position position="74"/>
    </location>
    <ligand>
        <name>[4Fe-4S] cluster</name>
        <dbReference type="ChEBI" id="CHEBI:49883"/>
        <label>2</label>
    </ligand>
</feature>
<feature type="binding site" evidence="1">
    <location>
        <position position="104"/>
    </location>
    <ligand>
        <name>[4Fe-4S] cluster</name>
        <dbReference type="ChEBI" id="CHEBI:49883"/>
        <label>2</label>
    </ligand>
</feature>
<feature type="binding site" evidence="1">
    <location>
        <position position="107"/>
    </location>
    <ligand>
        <name>[4Fe-4S] cluster</name>
        <dbReference type="ChEBI" id="CHEBI:49883"/>
        <label>2</label>
    </ligand>
</feature>
<feature type="binding site" evidence="1">
    <location>
        <position position="110"/>
    </location>
    <ligand>
        <name>[4Fe-4S] cluster</name>
        <dbReference type="ChEBI" id="CHEBI:49883"/>
        <label>2</label>
    </ligand>
</feature>
<feature type="binding site" evidence="1">
    <location>
        <position position="114"/>
    </location>
    <ligand>
        <name>[4Fe-4S] cluster</name>
        <dbReference type="ChEBI" id="CHEBI:49883"/>
        <label>1</label>
    </ligand>
</feature>
<comment type="function">
    <text evidence="1">NDH shuttles electrons from NAD(P)H:plastoquinone, via FMN and iron-sulfur (Fe-S) centers, to quinones in the photosynthetic chain and possibly in a chloroplast respiratory chain. The immediate electron acceptor for the enzyme in this species is believed to be plastoquinone. Couples the redox reaction to proton translocation, and thus conserves the redox energy in a proton gradient.</text>
</comment>
<comment type="catalytic activity">
    <reaction evidence="1">
        <text>a plastoquinone + NADH + (n+1) H(+)(in) = a plastoquinol + NAD(+) + n H(+)(out)</text>
        <dbReference type="Rhea" id="RHEA:42608"/>
        <dbReference type="Rhea" id="RHEA-COMP:9561"/>
        <dbReference type="Rhea" id="RHEA-COMP:9562"/>
        <dbReference type="ChEBI" id="CHEBI:15378"/>
        <dbReference type="ChEBI" id="CHEBI:17757"/>
        <dbReference type="ChEBI" id="CHEBI:57540"/>
        <dbReference type="ChEBI" id="CHEBI:57945"/>
        <dbReference type="ChEBI" id="CHEBI:62192"/>
    </reaction>
</comment>
<comment type="catalytic activity">
    <reaction evidence="1">
        <text>a plastoquinone + NADPH + (n+1) H(+)(in) = a plastoquinol + NADP(+) + n H(+)(out)</text>
        <dbReference type="Rhea" id="RHEA:42612"/>
        <dbReference type="Rhea" id="RHEA-COMP:9561"/>
        <dbReference type="Rhea" id="RHEA-COMP:9562"/>
        <dbReference type="ChEBI" id="CHEBI:15378"/>
        <dbReference type="ChEBI" id="CHEBI:17757"/>
        <dbReference type="ChEBI" id="CHEBI:57783"/>
        <dbReference type="ChEBI" id="CHEBI:58349"/>
        <dbReference type="ChEBI" id="CHEBI:62192"/>
    </reaction>
</comment>
<comment type="cofactor">
    <cofactor evidence="1">
        <name>[4Fe-4S] cluster</name>
        <dbReference type="ChEBI" id="CHEBI:49883"/>
    </cofactor>
    <text evidence="1">Binds 2 [4Fe-4S] clusters per subunit.</text>
</comment>
<comment type="subunit">
    <text evidence="1">NDH is composed of at least 16 different subunits, 5 of which are encoded in the nucleus.</text>
</comment>
<comment type="subcellular location">
    <subcellularLocation>
        <location evidence="1">Plastid</location>
        <location evidence="1">Chloroplast thylakoid membrane</location>
        <topology evidence="1">Peripheral membrane protein</topology>
    </subcellularLocation>
</comment>
<comment type="similarity">
    <text evidence="1">Belongs to the complex I 23 kDa subunit family.</text>
</comment>
<sequence length="172" mass="20086">MLPMITGFMNYGQQTLRAARYIGQGFMITLSHTNRLPVTIQYPYEKLITSERFRGRIHFEFDKCIACEVCVRVCPIDLPVVDWKLETNIRKKRLLNYSIDFGICIFCGNCVEYCPTNCLSMTEEYEFSTYDRHELNYNQIALGRLPMSVIDDYTIRTIWNSPQTKNGVNPLI</sequence>
<name>NDHI_ARATH</name>
<proteinExistence type="evidence at protein level"/>
<dbReference type="EC" id="7.1.1.-" evidence="1"/>
<dbReference type="EMBL" id="AP000423">
    <property type="protein sequence ID" value="BAA84441.1"/>
    <property type="molecule type" value="Genomic_DNA"/>
</dbReference>
<dbReference type="RefSeq" id="NP_051113.1">
    <property type="nucleotide sequence ID" value="NC_000932.1"/>
</dbReference>
<dbReference type="PDB" id="7WFG">
    <property type="method" value="EM"/>
    <property type="resolution" value="4.33 A"/>
    <property type="chains" value="I=1-172"/>
</dbReference>
<dbReference type="PDB" id="7WG5">
    <property type="method" value="EM"/>
    <property type="resolution" value="3.89 A"/>
    <property type="chains" value="I=1-172"/>
</dbReference>
<dbReference type="PDBsum" id="7WFG"/>
<dbReference type="PDBsum" id="7WG5"/>
<dbReference type="EMDB" id="EMD-32465"/>
<dbReference type="EMDB" id="EMD-32477"/>
<dbReference type="SMR" id="P56755"/>
<dbReference type="BioGRID" id="29994">
    <property type="interactions" value="3"/>
</dbReference>
<dbReference type="FunCoup" id="P56755">
    <property type="interactions" value="55"/>
</dbReference>
<dbReference type="STRING" id="3702.P56755"/>
<dbReference type="TCDB" id="3.D.1.8.1">
    <property type="family name" value="the h+ or na+-translocating nadh dehydrogenase (ndh) family"/>
</dbReference>
<dbReference type="PaxDb" id="3702-ATCG01090.1"/>
<dbReference type="ProteomicsDB" id="251184"/>
<dbReference type="EnsemblPlants" id="ATCG01090.1">
    <property type="protein sequence ID" value="ATCG01090.1"/>
    <property type="gene ID" value="ATCG01090"/>
</dbReference>
<dbReference type="GeneID" id="844806"/>
<dbReference type="Gramene" id="ATCG01090.1">
    <property type="protein sequence ID" value="ATCG01090.1"/>
    <property type="gene ID" value="ATCG01090"/>
</dbReference>
<dbReference type="KEGG" id="ath:ArthCp078"/>
<dbReference type="Araport" id="ATCG01090"/>
<dbReference type="TAIR" id="ATCG01090">
    <property type="gene designation" value="NDHI"/>
</dbReference>
<dbReference type="eggNOG" id="KOG3256">
    <property type="taxonomic scope" value="Eukaryota"/>
</dbReference>
<dbReference type="HOGENOM" id="CLU_122804_0_0_1"/>
<dbReference type="InParanoid" id="P56755"/>
<dbReference type="OMA" id="WRPVIDY"/>
<dbReference type="BioCyc" id="ARA:ATCG01090-MONOMER"/>
<dbReference type="PRO" id="PR:P56755"/>
<dbReference type="Proteomes" id="UP000006548">
    <property type="component" value="Chloroplast Pltd"/>
</dbReference>
<dbReference type="ExpressionAtlas" id="P56755">
    <property type="expression patterns" value="baseline and differential"/>
</dbReference>
<dbReference type="GO" id="GO:0009507">
    <property type="term" value="C:chloroplast"/>
    <property type="evidence" value="ECO:0007005"/>
    <property type="project" value="TAIR"/>
</dbReference>
<dbReference type="GO" id="GO:0009535">
    <property type="term" value="C:chloroplast thylakoid membrane"/>
    <property type="evidence" value="ECO:0007005"/>
    <property type="project" value="TAIR"/>
</dbReference>
<dbReference type="GO" id="GO:0009536">
    <property type="term" value="C:plastid"/>
    <property type="evidence" value="ECO:0007005"/>
    <property type="project" value="TAIR"/>
</dbReference>
<dbReference type="GO" id="GO:0051539">
    <property type="term" value="F:4 iron, 4 sulfur cluster binding"/>
    <property type="evidence" value="ECO:0007669"/>
    <property type="project" value="UniProtKB-KW"/>
</dbReference>
<dbReference type="GO" id="GO:0005506">
    <property type="term" value="F:iron ion binding"/>
    <property type="evidence" value="ECO:0007669"/>
    <property type="project" value="UniProtKB-UniRule"/>
</dbReference>
<dbReference type="GO" id="GO:0008137">
    <property type="term" value="F:NADH dehydrogenase (ubiquinone) activity"/>
    <property type="evidence" value="ECO:0007669"/>
    <property type="project" value="InterPro"/>
</dbReference>
<dbReference type="GO" id="GO:0003959">
    <property type="term" value="F:NADPH dehydrogenase activity"/>
    <property type="evidence" value="ECO:0000304"/>
    <property type="project" value="TAIR"/>
</dbReference>
<dbReference type="GO" id="GO:0048038">
    <property type="term" value="F:quinone binding"/>
    <property type="evidence" value="ECO:0007669"/>
    <property type="project" value="UniProtKB-KW"/>
</dbReference>
<dbReference type="GO" id="GO:0015979">
    <property type="term" value="P:photosynthesis"/>
    <property type="evidence" value="ECO:0000304"/>
    <property type="project" value="TAIR"/>
</dbReference>
<dbReference type="GO" id="GO:0019684">
    <property type="term" value="P:photosynthesis, light reaction"/>
    <property type="evidence" value="ECO:0007669"/>
    <property type="project" value="UniProtKB-UniRule"/>
</dbReference>
<dbReference type="FunFam" id="3.30.70.3270:FF:000006">
    <property type="entry name" value="NAD(P)H-quinone oxidoreductase subunit I, chloroplastic"/>
    <property type="match status" value="1"/>
</dbReference>
<dbReference type="Gene3D" id="3.30.70.3270">
    <property type="match status" value="1"/>
</dbReference>
<dbReference type="HAMAP" id="MF_01351">
    <property type="entry name" value="NDH1_NuoI"/>
    <property type="match status" value="1"/>
</dbReference>
<dbReference type="InterPro" id="IPR017896">
    <property type="entry name" value="4Fe4S_Fe-S-bd"/>
</dbReference>
<dbReference type="InterPro" id="IPR017900">
    <property type="entry name" value="4Fe4S_Fe_S_CS"/>
</dbReference>
<dbReference type="InterPro" id="IPR010226">
    <property type="entry name" value="NADH_quinone_OxRdtase_chainI"/>
</dbReference>
<dbReference type="InterPro" id="IPR004497">
    <property type="entry name" value="NDHI"/>
</dbReference>
<dbReference type="NCBIfam" id="TIGR00403">
    <property type="entry name" value="ndhI"/>
    <property type="match status" value="1"/>
</dbReference>
<dbReference type="NCBIfam" id="TIGR01971">
    <property type="entry name" value="NuoI"/>
    <property type="match status" value="1"/>
</dbReference>
<dbReference type="NCBIfam" id="NF004537">
    <property type="entry name" value="PRK05888.1-3"/>
    <property type="match status" value="1"/>
</dbReference>
<dbReference type="PANTHER" id="PTHR47275">
    <property type="entry name" value="NAD(P)H-QUINONE OXIDOREDUCTASE SUBUNIT I, CHLOROPLASTIC"/>
    <property type="match status" value="1"/>
</dbReference>
<dbReference type="PANTHER" id="PTHR47275:SF1">
    <property type="entry name" value="NAD(P)H-QUINONE OXIDOREDUCTASE SUBUNIT I, CHLOROPLASTIC"/>
    <property type="match status" value="1"/>
</dbReference>
<dbReference type="Pfam" id="PF13187">
    <property type="entry name" value="Fer4_9"/>
    <property type="match status" value="1"/>
</dbReference>
<dbReference type="SUPFAM" id="SSF54862">
    <property type="entry name" value="4Fe-4S ferredoxins"/>
    <property type="match status" value="1"/>
</dbReference>
<dbReference type="PROSITE" id="PS00198">
    <property type="entry name" value="4FE4S_FER_1"/>
    <property type="match status" value="2"/>
</dbReference>
<dbReference type="PROSITE" id="PS51379">
    <property type="entry name" value="4FE4S_FER_2"/>
    <property type="match status" value="2"/>
</dbReference>
<organism>
    <name type="scientific">Arabidopsis thaliana</name>
    <name type="common">Mouse-ear cress</name>
    <dbReference type="NCBI Taxonomy" id="3702"/>
    <lineage>
        <taxon>Eukaryota</taxon>
        <taxon>Viridiplantae</taxon>
        <taxon>Streptophyta</taxon>
        <taxon>Embryophyta</taxon>
        <taxon>Tracheophyta</taxon>
        <taxon>Spermatophyta</taxon>
        <taxon>Magnoliopsida</taxon>
        <taxon>eudicotyledons</taxon>
        <taxon>Gunneridae</taxon>
        <taxon>Pentapetalae</taxon>
        <taxon>rosids</taxon>
        <taxon>malvids</taxon>
        <taxon>Brassicales</taxon>
        <taxon>Brassicaceae</taxon>
        <taxon>Camelineae</taxon>
        <taxon>Arabidopsis</taxon>
    </lineage>
</organism>